<organism>
    <name type="scientific">Paraburkholderia xenovorans (strain LB400)</name>
    <dbReference type="NCBI Taxonomy" id="266265"/>
    <lineage>
        <taxon>Bacteria</taxon>
        <taxon>Pseudomonadati</taxon>
        <taxon>Pseudomonadota</taxon>
        <taxon>Betaproteobacteria</taxon>
        <taxon>Burkholderiales</taxon>
        <taxon>Burkholderiaceae</taxon>
        <taxon>Paraburkholderia</taxon>
    </lineage>
</organism>
<dbReference type="EMBL" id="CP000270">
    <property type="protein sequence ID" value="ABE29732.1"/>
    <property type="molecule type" value="Genomic_DNA"/>
</dbReference>
<dbReference type="RefSeq" id="WP_011487465.1">
    <property type="nucleotide sequence ID" value="NC_007951.1"/>
</dbReference>
<dbReference type="SMR" id="Q142K7"/>
<dbReference type="STRING" id="266265.Bxe_A3250"/>
<dbReference type="KEGG" id="bxb:DR64_952"/>
<dbReference type="KEGG" id="bxe:Bxe_A3250"/>
<dbReference type="PATRIC" id="fig|266265.5.peg.1229"/>
<dbReference type="eggNOG" id="COG2156">
    <property type="taxonomic scope" value="Bacteria"/>
</dbReference>
<dbReference type="OrthoDB" id="9788285at2"/>
<dbReference type="Proteomes" id="UP000001817">
    <property type="component" value="Chromosome 1"/>
</dbReference>
<dbReference type="GO" id="GO:0005886">
    <property type="term" value="C:plasma membrane"/>
    <property type="evidence" value="ECO:0007669"/>
    <property type="project" value="UniProtKB-SubCell"/>
</dbReference>
<dbReference type="GO" id="GO:0005524">
    <property type="term" value="F:ATP binding"/>
    <property type="evidence" value="ECO:0007669"/>
    <property type="project" value="UniProtKB-UniRule"/>
</dbReference>
<dbReference type="GO" id="GO:0008556">
    <property type="term" value="F:P-type potassium transmembrane transporter activity"/>
    <property type="evidence" value="ECO:0007669"/>
    <property type="project" value="InterPro"/>
</dbReference>
<dbReference type="HAMAP" id="MF_00276">
    <property type="entry name" value="KdpC"/>
    <property type="match status" value="1"/>
</dbReference>
<dbReference type="InterPro" id="IPR003820">
    <property type="entry name" value="KdpC"/>
</dbReference>
<dbReference type="NCBIfam" id="TIGR00681">
    <property type="entry name" value="kdpC"/>
    <property type="match status" value="1"/>
</dbReference>
<dbReference type="NCBIfam" id="NF001454">
    <property type="entry name" value="PRK00315.1"/>
    <property type="match status" value="1"/>
</dbReference>
<dbReference type="PANTHER" id="PTHR30042">
    <property type="entry name" value="POTASSIUM-TRANSPORTING ATPASE C CHAIN"/>
    <property type="match status" value="1"/>
</dbReference>
<dbReference type="PANTHER" id="PTHR30042:SF2">
    <property type="entry name" value="POTASSIUM-TRANSPORTING ATPASE KDPC SUBUNIT"/>
    <property type="match status" value="1"/>
</dbReference>
<dbReference type="Pfam" id="PF02669">
    <property type="entry name" value="KdpC"/>
    <property type="match status" value="1"/>
</dbReference>
<dbReference type="PIRSF" id="PIRSF001296">
    <property type="entry name" value="K_ATPase_KdpC"/>
    <property type="match status" value="1"/>
</dbReference>
<sequence>MKNLFRPLIVLFVVLAALTGLAYPAVMTAFGQAVFHDQANGSMLEQDGKVVGSKLIGQQFDAPQYFWGRLSATSPMPYNAQGSSGSNLGPTNPALLDEIKGRIDALKAAGTDMSKPVPVDLVTSSGSGLDPEISPAAAAYQIERVARARKLAPNDVQALVDRYTSGRQFGILGEARVNVLQLNLALDEMKRG</sequence>
<evidence type="ECO:0000255" key="1">
    <source>
        <dbReference type="HAMAP-Rule" id="MF_00276"/>
    </source>
</evidence>
<protein>
    <recommendedName>
        <fullName evidence="1">Potassium-transporting ATPase KdpC subunit</fullName>
    </recommendedName>
    <alternativeName>
        <fullName evidence="1">ATP phosphohydrolase [potassium-transporting] C chain</fullName>
    </alternativeName>
    <alternativeName>
        <fullName evidence="1">Potassium-binding and translocating subunit C</fullName>
    </alternativeName>
    <alternativeName>
        <fullName evidence="1">Potassium-translocating ATPase C chain</fullName>
    </alternativeName>
</protein>
<feature type="chain" id="PRO_1000022279" description="Potassium-transporting ATPase KdpC subunit">
    <location>
        <begin position="1"/>
        <end position="192"/>
    </location>
</feature>
<feature type="transmembrane region" description="Helical" evidence="1">
    <location>
        <begin position="7"/>
        <end position="27"/>
    </location>
</feature>
<proteinExistence type="inferred from homology"/>
<reference key="1">
    <citation type="journal article" date="2006" name="Proc. Natl. Acad. Sci. U.S.A.">
        <title>Burkholderia xenovorans LB400 harbors a multi-replicon, 9.73-Mbp genome shaped for versatility.</title>
        <authorList>
            <person name="Chain P.S.G."/>
            <person name="Denef V.J."/>
            <person name="Konstantinidis K.T."/>
            <person name="Vergez L.M."/>
            <person name="Agullo L."/>
            <person name="Reyes V.L."/>
            <person name="Hauser L."/>
            <person name="Cordova M."/>
            <person name="Gomez L."/>
            <person name="Gonzalez M."/>
            <person name="Land M."/>
            <person name="Lao V."/>
            <person name="Larimer F."/>
            <person name="LiPuma J.J."/>
            <person name="Mahenthiralingam E."/>
            <person name="Malfatti S.A."/>
            <person name="Marx C.J."/>
            <person name="Parnell J.J."/>
            <person name="Ramette A."/>
            <person name="Richardson P."/>
            <person name="Seeger M."/>
            <person name="Smith D."/>
            <person name="Spilker T."/>
            <person name="Sul W.J."/>
            <person name="Tsoi T.V."/>
            <person name="Ulrich L.E."/>
            <person name="Zhulin I.B."/>
            <person name="Tiedje J.M."/>
        </authorList>
    </citation>
    <scope>NUCLEOTIDE SEQUENCE [LARGE SCALE GENOMIC DNA]</scope>
    <source>
        <strain>LB400</strain>
    </source>
</reference>
<comment type="function">
    <text evidence="1">Part of the high-affinity ATP-driven potassium transport (or Kdp) system, which catalyzes the hydrolysis of ATP coupled with the electrogenic transport of potassium into the cytoplasm. This subunit acts as a catalytic chaperone that increases the ATP-binding affinity of the ATP-hydrolyzing subunit KdpB by the formation of a transient KdpB/KdpC/ATP ternary complex.</text>
</comment>
<comment type="subunit">
    <text evidence="1">The system is composed of three essential subunits: KdpA, KdpB and KdpC.</text>
</comment>
<comment type="subcellular location">
    <subcellularLocation>
        <location evidence="1">Cell inner membrane</location>
        <topology evidence="1">Single-pass membrane protein</topology>
    </subcellularLocation>
</comment>
<comment type="similarity">
    <text evidence="1">Belongs to the KdpC family.</text>
</comment>
<gene>
    <name evidence="1" type="primary">kdpC</name>
    <name type="ordered locus">Bxeno_A1194</name>
    <name type="ORF">Bxe_A3250</name>
</gene>
<accession>Q142K7</accession>
<name>KDPC_PARXL</name>
<keyword id="KW-0067">ATP-binding</keyword>
<keyword id="KW-0997">Cell inner membrane</keyword>
<keyword id="KW-1003">Cell membrane</keyword>
<keyword id="KW-0406">Ion transport</keyword>
<keyword id="KW-0472">Membrane</keyword>
<keyword id="KW-0547">Nucleotide-binding</keyword>
<keyword id="KW-0630">Potassium</keyword>
<keyword id="KW-0633">Potassium transport</keyword>
<keyword id="KW-1185">Reference proteome</keyword>
<keyword id="KW-0812">Transmembrane</keyword>
<keyword id="KW-1133">Transmembrane helix</keyword>
<keyword id="KW-0813">Transport</keyword>